<proteinExistence type="inferred from homology"/>
<gene>
    <name evidence="1" type="primary">rplC</name>
    <name type="ordered locus">HDEF_1866</name>
</gene>
<reference key="1">
    <citation type="journal article" date="2009" name="Proc. Natl. Acad. Sci. U.S.A.">
        <title>Hamiltonella defensa, genome evolution of protective bacterial endosymbiont from pathogenic ancestors.</title>
        <authorList>
            <person name="Degnan P.H."/>
            <person name="Yu Y."/>
            <person name="Sisneros N."/>
            <person name="Wing R.A."/>
            <person name="Moran N.A."/>
        </authorList>
    </citation>
    <scope>NUCLEOTIDE SEQUENCE [LARGE SCALE GENOMIC DNA]</scope>
    <source>
        <strain>5AT</strain>
    </source>
</reference>
<comment type="function">
    <text evidence="1">One of the primary rRNA binding proteins, it binds directly near the 3'-end of the 23S rRNA, where it nucleates assembly of the 50S subunit.</text>
</comment>
<comment type="subunit">
    <text evidence="1">Part of the 50S ribosomal subunit. Forms a cluster with proteins L14 and L19.</text>
</comment>
<comment type="PTM">
    <text evidence="1">Methylated by PrmB.</text>
</comment>
<comment type="similarity">
    <text evidence="1">Belongs to the universal ribosomal protein uL3 family.</text>
</comment>
<keyword id="KW-0488">Methylation</keyword>
<keyword id="KW-0687">Ribonucleoprotein</keyword>
<keyword id="KW-0689">Ribosomal protein</keyword>
<keyword id="KW-0694">RNA-binding</keyword>
<keyword id="KW-0699">rRNA-binding</keyword>
<protein>
    <recommendedName>
        <fullName evidence="1">Large ribosomal subunit protein uL3</fullName>
    </recommendedName>
    <alternativeName>
        <fullName evidence="3">50S ribosomal protein L3</fullName>
    </alternativeName>
</protein>
<dbReference type="EMBL" id="CP001277">
    <property type="protein sequence ID" value="ACQ68461.1"/>
    <property type="molecule type" value="Genomic_DNA"/>
</dbReference>
<dbReference type="RefSeq" id="WP_015874225.1">
    <property type="nucleotide sequence ID" value="NC_012751.1"/>
</dbReference>
<dbReference type="SMR" id="C4K7B8"/>
<dbReference type="STRING" id="572265.HDEF_1866"/>
<dbReference type="GeneID" id="66261451"/>
<dbReference type="KEGG" id="hde:HDEF_1866"/>
<dbReference type="eggNOG" id="COG0087">
    <property type="taxonomic scope" value="Bacteria"/>
</dbReference>
<dbReference type="HOGENOM" id="CLU_044142_4_1_6"/>
<dbReference type="Proteomes" id="UP000002334">
    <property type="component" value="Chromosome"/>
</dbReference>
<dbReference type="GO" id="GO:0022625">
    <property type="term" value="C:cytosolic large ribosomal subunit"/>
    <property type="evidence" value="ECO:0007669"/>
    <property type="project" value="TreeGrafter"/>
</dbReference>
<dbReference type="GO" id="GO:0019843">
    <property type="term" value="F:rRNA binding"/>
    <property type="evidence" value="ECO:0007669"/>
    <property type="project" value="UniProtKB-UniRule"/>
</dbReference>
<dbReference type="GO" id="GO:0003735">
    <property type="term" value="F:structural constituent of ribosome"/>
    <property type="evidence" value="ECO:0007669"/>
    <property type="project" value="InterPro"/>
</dbReference>
<dbReference type="GO" id="GO:0006412">
    <property type="term" value="P:translation"/>
    <property type="evidence" value="ECO:0007669"/>
    <property type="project" value="UniProtKB-UniRule"/>
</dbReference>
<dbReference type="FunFam" id="2.40.30.10:FF:000004">
    <property type="entry name" value="50S ribosomal protein L3"/>
    <property type="match status" value="1"/>
</dbReference>
<dbReference type="FunFam" id="3.30.160.810:FF:000001">
    <property type="entry name" value="50S ribosomal protein L3"/>
    <property type="match status" value="1"/>
</dbReference>
<dbReference type="Gene3D" id="3.30.160.810">
    <property type="match status" value="1"/>
</dbReference>
<dbReference type="Gene3D" id="2.40.30.10">
    <property type="entry name" value="Translation factors"/>
    <property type="match status" value="1"/>
</dbReference>
<dbReference type="HAMAP" id="MF_01325_B">
    <property type="entry name" value="Ribosomal_uL3_B"/>
    <property type="match status" value="1"/>
</dbReference>
<dbReference type="InterPro" id="IPR000597">
    <property type="entry name" value="Ribosomal_uL3"/>
</dbReference>
<dbReference type="InterPro" id="IPR019927">
    <property type="entry name" value="Ribosomal_uL3_bac/org-type"/>
</dbReference>
<dbReference type="InterPro" id="IPR019926">
    <property type="entry name" value="Ribosomal_uL3_CS"/>
</dbReference>
<dbReference type="InterPro" id="IPR009000">
    <property type="entry name" value="Transl_B-barrel_sf"/>
</dbReference>
<dbReference type="NCBIfam" id="TIGR03625">
    <property type="entry name" value="L3_bact"/>
    <property type="match status" value="1"/>
</dbReference>
<dbReference type="PANTHER" id="PTHR11229">
    <property type="entry name" value="50S RIBOSOMAL PROTEIN L3"/>
    <property type="match status" value="1"/>
</dbReference>
<dbReference type="PANTHER" id="PTHR11229:SF16">
    <property type="entry name" value="LARGE RIBOSOMAL SUBUNIT PROTEIN UL3C"/>
    <property type="match status" value="1"/>
</dbReference>
<dbReference type="Pfam" id="PF00297">
    <property type="entry name" value="Ribosomal_L3"/>
    <property type="match status" value="1"/>
</dbReference>
<dbReference type="SUPFAM" id="SSF50447">
    <property type="entry name" value="Translation proteins"/>
    <property type="match status" value="1"/>
</dbReference>
<dbReference type="PROSITE" id="PS00474">
    <property type="entry name" value="RIBOSOMAL_L3"/>
    <property type="match status" value="1"/>
</dbReference>
<organism>
    <name type="scientific">Hamiltonella defensa subsp. Acyrthosiphon pisum (strain 5AT)</name>
    <dbReference type="NCBI Taxonomy" id="572265"/>
    <lineage>
        <taxon>Bacteria</taxon>
        <taxon>Pseudomonadati</taxon>
        <taxon>Pseudomonadota</taxon>
        <taxon>Gammaproteobacteria</taxon>
        <taxon>Enterobacterales</taxon>
        <taxon>Enterobacteriaceae</taxon>
        <taxon>aphid secondary symbionts</taxon>
        <taxon>Candidatus Hamiltonella</taxon>
    </lineage>
</organism>
<accession>C4K7B8</accession>
<evidence type="ECO:0000255" key="1">
    <source>
        <dbReference type="HAMAP-Rule" id="MF_01325"/>
    </source>
</evidence>
<evidence type="ECO:0000256" key="2">
    <source>
        <dbReference type="SAM" id="MobiDB-lite"/>
    </source>
</evidence>
<evidence type="ECO:0000305" key="3"/>
<sequence length="210" mass="22666">MKGLVGKKLGMTRIFTKDGISIPVTVIEIKANRVTQIKNLDSDGYLALQITTGTKKASRVNKPKAGHFAKANVEAGRGLWEFRVSEQDATVFLGHTFEVSMFKPGDIVDVTGKSKGKGFSGTVKRWNFRTQDASHGNSLSHRVPGSIGQNQTPGKVFKGKKMSGQLGNERVTIQNLEVVRVDVVREILLIKGGVPGAVGKDVIVKLAVKA</sequence>
<name>RL3_HAMD5</name>
<feature type="chain" id="PRO_1000214512" description="Large ribosomal subunit protein uL3">
    <location>
        <begin position="1"/>
        <end position="210"/>
    </location>
</feature>
<feature type="region of interest" description="Disordered" evidence="2">
    <location>
        <begin position="133"/>
        <end position="156"/>
    </location>
</feature>
<feature type="modified residue" description="N5-methylglutamine" evidence="1">
    <location>
        <position position="151"/>
    </location>
</feature>